<evidence type="ECO:0000255" key="1">
    <source>
        <dbReference type="HAMAP-Rule" id="MF_00713"/>
    </source>
</evidence>
<keyword id="KW-0560">Oxidoreductase</keyword>
<keyword id="KW-0663">Pyridoxal phosphate</keyword>
<organism>
    <name type="scientific">Nitrosomonas eutropha (strain DSM 101675 / C91 / Nm57)</name>
    <dbReference type="NCBI Taxonomy" id="335283"/>
    <lineage>
        <taxon>Bacteria</taxon>
        <taxon>Pseudomonadati</taxon>
        <taxon>Pseudomonadota</taxon>
        <taxon>Betaproteobacteria</taxon>
        <taxon>Nitrosomonadales</taxon>
        <taxon>Nitrosomonadaceae</taxon>
        <taxon>Nitrosomonas</taxon>
    </lineage>
</organism>
<gene>
    <name evidence="1" type="primary">gcvPB</name>
    <name type="ordered locus">Neut_1952</name>
</gene>
<proteinExistence type="inferred from homology"/>
<dbReference type="EC" id="1.4.4.2" evidence="1"/>
<dbReference type="EMBL" id="CP000450">
    <property type="protein sequence ID" value="ABI60182.1"/>
    <property type="molecule type" value="Genomic_DNA"/>
</dbReference>
<dbReference type="RefSeq" id="WP_011634983.1">
    <property type="nucleotide sequence ID" value="NC_008344.1"/>
</dbReference>
<dbReference type="SMR" id="Q0AEQ0"/>
<dbReference type="STRING" id="335283.Neut_1952"/>
<dbReference type="KEGG" id="net:Neut_1952"/>
<dbReference type="eggNOG" id="COG1003">
    <property type="taxonomic scope" value="Bacteria"/>
</dbReference>
<dbReference type="HOGENOM" id="CLU_004620_5_0_4"/>
<dbReference type="OrthoDB" id="9801272at2"/>
<dbReference type="Proteomes" id="UP000001966">
    <property type="component" value="Chromosome"/>
</dbReference>
<dbReference type="GO" id="GO:0005829">
    <property type="term" value="C:cytosol"/>
    <property type="evidence" value="ECO:0007669"/>
    <property type="project" value="TreeGrafter"/>
</dbReference>
<dbReference type="GO" id="GO:0005960">
    <property type="term" value="C:glycine cleavage complex"/>
    <property type="evidence" value="ECO:0007669"/>
    <property type="project" value="TreeGrafter"/>
</dbReference>
<dbReference type="GO" id="GO:0016594">
    <property type="term" value="F:glycine binding"/>
    <property type="evidence" value="ECO:0007669"/>
    <property type="project" value="TreeGrafter"/>
</dbReference>
<dbReference type="GO" id="GO:0004375">
    <property type="term" value="F:glycine dehydrogenase (decarboxylating) activity"/>
    <property type="evidence" value="ECO:0007669"/>
    <property type="project" value="UniProtKB-EC"/>
</dbReference>
<dbReference type="GO" id="GO:0030170">
    <property type="term" value="F:pyridoxal phosphate binding"/>
    <property type="evidence" value="ECO:0007669"/>
    <property type="project" value="TreeGrafter"/>
</dbReference>
<dbReference type="GO" id="GO:0019464">
    <property type="term" value="P:glycine decarboxylation via glycine cleavage system"/>
    <property type="evidence" value="ECO:0007669"/>
    <property type="project" value="UniProtKB-UniRule"/>
</dbReference>
<dbReference type="FunFam" id="3.40.640.10:FF:000224">
    <property type="entry name" value="Probable glycine dehydrogenase (decarboxylating) subunit 2"/>
    <property type="match status" value="1"/>
</dbReference>
<dbReference type="FunFam" id="3.90.1150.10:FF:000014">
    <property type="entry name" value="Probable glycine dehydrogenase (decarboxylating) subunit 2"/>
    <property type="match status" value="1"/>
</dbReference>
<dbReference type="Gene3D" id="6.20.440.10">
    <property type="match status" value="1"/>
</dbReference>
<dbReference type="Gene3D" id="3.90.1150.10">
    <property type="entry name" value="Aspartate Aminotransferase, domain 1"/>
    <property type="match status" value="1"/>
</dbReference>
<dbReference type="Gene3D" id="3.40.640.10">
    <property type="entry name" value="Type I PLP-dependent aspartate aminotransferase-like (Major domain)"/>
    <property type="match status" value="1"/>
</dbReference>
<dbReference type="HAMAP" id="MF_00713">
    <property type="entry name" value="GcvPB"/>
    <property type="match status" value="1"/>
</dbReference>
<dbReference type="InterPro" id="IPR000192">
    <property type="entry name" value="Aminotrans_V_dom"/>
</dbReference>
<dbReference type="InterPro" id="IPR023012">
    <property type="entry name" value="GcvPB"/>
</dbReference>
<dbReference type="InterPro" id="IPR049316">
    <property type="entry name" value="GDC-P_C"/>
</dbReference>
<dbReference type="InterPro" id="IPR020581">
    <property type="entry name" value="GDC_P"/>
</dbReference>
<dbReference type="InterPro" id="IPR015424">
    <property type="entry name" value="PyrdxlP-dep_Trfase"/>
</dbReference>
<dbReference type="InterPro" id="IPR015421">
    <property type="entry name" value="PyrdxlP-dep_Trfase_major"/>
</dbReference>
<dbReference type="InterPro" id="IPR015422">
    <property type="entry name" value="PyrdxlP-dep_Trfase_small"/>
</dbReference>
<dbReference type="NCBIfam" id="NF003346">
    <property type="entry name" value="PRK04366.1"/>
    <property type="match status" value="1"/>
</dbReference>
<dbReference type="PANTHER" id="PTHR11773:SF1">
    <property type="entry name" value="GLYCINE DEHYDROGENASE (DECARBOXYLATING), MITOCHONDRIAL"/>
    <property type="match status" value="1"/>
</dbReference>
<dbReference type="PANTHER" id="PTHR11773">
    <property type="entry name" value="GLYCINE DEHYDROGENASE, DECARBOXYLATING"/>
    <property type="match status" value="1"/>
</dbReference>
<dbReference type="Pfam" id="PF00266">
    <property type="entry name" value="Aminotran_5"/>
    <property type="match status" value="1"/>
</dbReference>
<dbReference type="Pfam" id="PF21478">
    <property type="entry name" value="GcvP2_C"/>
    <property type="match status" value="1"/>
</dbReference>
<dbReference type="SUPFAM" id="SSF53383">
    <property type="entry name" value="PLP-dependent transferases"/>
    <property type="match status" value="1"/>
</dbReference>
<feature type="chain" id="PRO_1000045699" description="Probable glycine dehydrogenase (decarboxylating) subunit 2">
    <location>
        <begin position="1"/>
        <end position="483"/>
    </location>
</feature>
<feature type="modified residue" description="N6-(pyridoxal phosphate)lysine" evidence="1">
    <location>
        <position position="264"/>
    </location>
</feature>
<reference key="1">
    <citation type="journal article" date="2007" name="Environ. Microbiol.">
        <title>Whole-genome analysis of the ammonia-oxidizing bacterium, Nitrosomonas eutropha C91: implications for niche adaptation.</title>
        <authorList>
            <person name="Stein L.Y."/>
            <person name="Arp D.J."/>
            <person name="Berube P.M."/>
            <person name="Chain P.S."/>
            <person name="Hauser L."/>
            <person name="Jetten M.S."/>
            <person name="Klotz M.G."/>
            <person name="Larimer F.W."/>
            <person name="Norton J.M."/>
            <person name="Op den Camp H.J.M."/>
            <person name="Shin M."/>
            <person name="Wei X."/>
        </authorList>
    </citation>
    <scope>NUCLEOTIDE SEQUENCE [LARGE SCALE GENOMIC DNA]</scope>
    <source>
        <strain>DSM 101675 / C91 / Nm57</strain>
    </source>
</reference>
<protein>
    <recommendedName>
        <fullName evidence="1">Probable glycine dehydrogenase (decarboxylating) subunit 2</fullName>
        <ecNumber evidence="1">1.4.4.2</ecNumber>
    </recommendedName>
    <alternativeName>
        <fullName evidence="1">Glycine cleavage system P-protein subunit 2</fullName>
    </alternativeName>
    <alternativeName>
        <fullName evidence="1">Glycine decarboxylase subunit 2</fullName>
    </alternativeName>
    <alternativeName>
        <fullName evidence="1">Glycine dehydrogenase (aminomethyl-transferring) subunit 2</fullName>
    </alternativeName>
</protein>
<name>GCSPB_NITEC</name>
<comment type="function">
    <text evidence="1">The glycine cleavage system catalyzes the degradation of glycine. The P protein binds the alpha-amino group of glycine through its pyridoxal phosphate cofactor; CO(2) is released and the remaining methylamine moiety is then transferred to the lipoamide cofactor of the H protein.</text>
</comment>
<comment type="catalytic activity">
    <reaction evidence="1">
        <text>N(6)-[(R)-lipoyl]-L-lysyl-[glycine-cleavage complex H protein] + glycine + H(+) = N(6)-[(R)-S(8)-aminomethyldihydrolipoyl]-L-lysyl-[glycine-cleavage complex H protein] + CO2</text>
        <dbReference type="Rhea" id="RHEA:24304"/>
        <dbReference type="Rhea" id="RHEA-COMP:10494"/>
        <dbReference type="Rhea" id="RHEA-COMP:10495"/>
        <dbReference type="ChEBI" id="CHEBI:15378"/>
        <dbReference type="ChEBI" id="CHEBI:16526"/>
        <dbReference type="ChEBI" id="CHEBI:57305"/>
        <dbReference type="ChEBI" id="CHEBI:83099"/>
        <dbReference type="ChEBI" id="CHEBI:83143"/>
        <dbReference type="EC" id="1.4.4.2"/>
    </reaction>
</comment>
<comment type="cofactor">
    <cofactor evidence="1">
        <name>pyridoxal 5'-phosphate</name>
        <dbReference type="ChEBI" id="CHEBI:597326"/>
    </cofactor>
</comment>
<comment type="subunit">
    <text evidence="1">The glycine cleavage system is composed of four proteins: P, T, L and H. In this organism, the P 'protein' is a heterodimer of two subunits.</text>
</comment>
<comment type="similarity">
    <text evidence="1">Belongs to the GcvP family. C-terminal subunit subfamily.</text>
</comment>
<sequence>MLIFEHSRKNRLNYSQAPATRPAKNNIPDNLKRKSAPLLPEVSEMDTVRHYTRLSQKNFSIDTEFYPLGSCTMKYNPRACNALAMLPQFLSRHPLAPEDTGQGFLACMYELQEILKDVTGMSAVSLTSMAGAQGELIGITMIRAYHEARGDTERTEIIIPDAAHGTNPATAVMCGYKVIEIPTDRDGDVDMEALKAAVSPRTAGLMLTNPSTLGVFEKKVAEMSRVVHEAGGLLYYDGANLNAVLGKVKPGDMGFDVIHMNLHKTFSTPHGGGGPGAAPVGVADCLLPYLPIPIVAHEQGVYRWLTEKDRPQSIGRLSAHMGNAGVLLRAYIYVRLLGAEGMFRIAEYATLNANYLLAELRKLGFEIAYPSRRASHEFIVTMKEIKDKTGVTAMHLAKRLLDKGFHAPTVYFPLLVPECLLIEPAETESKETLDRFVVAMKEILDEIDTQPEMVKTAPHNMPLRKIDDVKAARELDLVWNPAG</sequence>
<accession>Q0AEQ0</accession>